<gene>
    <name evidence="1" type="primary">udk</name>
    <name type="ordered locus">USA300HOU_1611</name>
</gene>
<comment type="catalytic activity">
    <reaction evidence="1">
        <text>uridine + ATP = UMP + ADP + H(+)</text>
        <dbReference type="Rhea" id="RHEA:16825"/>
        <dbReference type="ChEBI" id="CHEBI:15378"/>
        <dbReference type="ChEBI" id="CHEBI:16704"/>
        <dbReference type="ChEBI" id="CHEBI:30616"/>
        <dbReference type="ChEBI" id="CHEBI:57865"/>
        <dbReference type="ChEBI" id="CHEBI:456216"/>
        <dbReference type="EC" id="2.7.1.48"/>
    </reaction>
</comment>
<comment type="catalytic activity">
    <reaction evidence="1">
        <text>cytidine + ATP = CMP + ADP + H(+)</text>
        <dbReference type="Rhea" id="RHEA:24674"/>
        <dbReference type="ChEBI" id="CHEBI:15378"/>
        <dbReference type="ChEBI" id="CHEBI:17562"/>
        <dbReference type="ChEBI" id="CHEBI:30616"/>
        <dbReference type="ChEBI" id="CHEBI:60377"/>
        <dbReference type="ChEBI" id="CHEBI:456216"/>
        <dbReference type="EC" id="2.7.1.48"/>
    </reaction>
</comment>
<comment type="pathway">
    <text evidence="1">Pyrimidine metabolism; CTP biosynthesis via salvage pathway; CTP from cytidine: step 1/3.</text>
</comment>
<comment type="pathway">
    <text evidence="1">Pyrimidine metabolism; UMP biosynthesis via salvage pathway; UMP from uridine: step 1/1.</text>
</comment>
<comment type="subcellular location">
    <subcellularLocation>
        <location evidence="1">Cytoplasm</location>
    </subcellularLocation>
</comment>
<comment type="similarity">
    <text evidence="1">Belongs to the uridine kinase family.</text>
</comment>
<proteinExistence type="inferred from homology"/>
<dbReference type="EC" id="2.7.1.48" evidence="1"/>
<dbReference type="EMBL" id="CP000730">
    <property type="protein sequence ID" value="ABX29618.1"/>
    <property type="molecule type" value="Genomic_DNA"/>
</dbReference>
<dbReference type="RefSeq" id="WP_000648617.1">
    <property type="nucleotide sequence ID" value="NC_010079.1"/>
</dbReference>
<dbReference type="SMR" id="A8Z4E9"/>
<dbReference type="KEGG" id="sax:USA300HOU_1611"/>
<dbReference type="HOGENOM" id="CLU_021278_1_2_9"/>
<dbReference type="UniPathway" id="UPA00574">
    <property type="reaction ID" value="UER00637"/>
</dbReference>
<dbReference type="UniPathway" id="UPA00579">
    <property type="reaction ID" value="UER00640"/>
</dbReference>
<dbReference type="GO" id="GO:0005737">
    <property type="term" value="C:cytoplasm"/>
    <property type="evidence" value="ECO:0007669"/>
    <property type="project" value="UniProtKB-SubCell"/>
</dbReference>
<dbReference type="GO" id="GO:0005524">
    <property type="term" value="F:ATP binding"/>
    <property type="evidence" value="ECO:0007669"/>
    <property type="project" value="UniProtKB-UniRule"/>
</dbReference>
<dbReference type="GO" id="GO:0043771">
    <property type="term" value="F:cytidine kinase activity"/>
    <property type="evidence" value="ECO:0007669"/>
    <property type="project" value="RHEA"/>
</dbReference>
<dbReference type="GO" id="GO:0004849">
    <property type="term" value="F:uridine kinase activity"/>
    <property type="evidence" value="ECO:0007669"/>
    <property type="project" value="UniProtKB-UniRule"/>
</dbReference>
<dbReference type="GO" id="GO:0044211">
    <property type="term" value="P:CTP salvage"/>
    <property type="evidence" value="ECO:0007669"/>
    <property type="project" value="UniProtKB-UniRule"/>
</dbReference>
<dbReference type="GO" id="GO:0044206">
    <property type="term" value="P:UMP salvage"/>
    <property type="evidence" value="ECO:0007669"/>
    <property type="project" value="UniProtKB-UniRule"/>
</dbReference>
<dbReference type="CDD" id="cd02023">
    <property type="entry name" value="UMPK"/>
    <property type="match status" value="1"/>
</dbReference>
<dbReference type="Gene3D" id="3.40.50.300">
    <property type="entry name" value="P-loop containing nucleotide triphosphate hydrolases"/>
    <property type="match status" value="1"/>
</dbReference>
<dbReference type="HAMAP" id="MF_00551">
    <property type="entry name" value="Uridine_kinase"/>
    <property type="match status" value="1"/>
</dbReference>
<dbReference type="InterPro" id="IPR027417">
    <property type="entry name" value="P-loop_NTPase"/>
</dbReference>
<dbReference type="InterPro" id="IPR006083">
    <property type="entry name" value="PRK/URK"/>
</dbReference>
<dbReference type="InterPro" id="IPR026008">
    <property type="entry name" value="Uridine_kinase"/>
</dbReference>
<dbReference type="InterPro" id="IPR000764">
    <property type="entry name" value="Uridine_kinase-like"/>
</dbReference>
<dbReference type="NCBIfam" id="NF004018">
    <property type="entry name" value="PRK05480.1"/>
    <property type="match status" value="1"/>
</dbReference>
<dbReference type="NCBIfam" id="TIGR00235">
    <property type="entry name" value="udk"/>
    <property type="match status" value="1"/>
</dbReference>
<dbReference type="PANTHER" id="PTHR10285">
    <property type="entry name" value="URIDINE KINASE"/>
    <property type="match status" value="1"/>
</dbReference>
<dbReference type="Pfam" id="PF00485">
    <property type="entry name" value="PRK"/>
    <property type="match status" value="1"/>
</dbReference>
<dbReference type="PRINTS" id="PR00988">
    <property type="entry name" value="URIDINKINASE"/>
</dbReference>
<dbReference type="SUPFAM" id="SSF52540">
    <property type="entry name" value="P-loop containing nucleoside triphosphate hydrolases"/>
    <property type="match status" value="1"/>
</dbReference>
<protein>
    <recommendedName>
        <fullName evidence="1">Uridine kinase</fullName>
        <ecNumber evidence="1">2.7.1.48</ecNumber>
    </recommendedName>
    <alternativeName>
        <fullName evidence="1">Cytidine monophosphokinase</fullName>
    </alternativeName>
    <alternativeName>
        <fullName evidence="1">Uridine monophosphokinase</fullName>
    </alternativeName>
</protein>
<feature type="chain" id="PRO_1000081975" description="Uridine kinase">
    <location>
        <begin position="1"/>
        <end position="207"/>
    </location>
</feature>
<feature type="binding site" evidence="1">
    <location>
        <begin position="11"/>
        <end position="18"/>
    </location>
    <ligand>
        <name>ATP</name>
        <dbReference type="ChEBI" id="CHEBI:30616"/>
    </ligand>
</feature>
<accession>A8Z4E9</accession>
<organism>
    <name type="scientific">Staphylococcus aureus (strain USA300 / TCH1516)</name>
    <dbReference type="NCBI Taxonomy" id="451516"/>
    <lineage>
        <taxon>Bacteria</taxon>
        <taxon>Bacillati</taxon>
        <taxon>Bacillota</taxon>
        <taxon>Bacilli</taxon>
        <taxon>Bacillales</taxon>
        <taxon>Staphylococcaceae</taxon>
        <taxon>Staphylococcus</taxon>
    </lineage>
</organism>
<name>URK_STAAT</name>
<evidence type="ECO:0000255" key="1">
    <source>
        <dbReference type="HAMAP-Rule" id="MF_00551"/>
    </source>
</evidence>
<keyword id="KW-0067">ATP-binding</keyword>
<keyword id="KW-0963">Cytoplasm</keyword>
<keyword id="KW-0418">Kinase</keyword>
<keyword id="KW-0547">Nucleotide-binding</keyword>
<keyword id="KW-0808">Transferase</keyword>
<sequence>MKATTIIGIAGGSGSGKTTVTNEIMKNLEGHSVALLAQDYYYKDQKHLTFDERLETNYDHPFAFDNDLLIENLKDLKNGKAVEVPTYDYASHTRSDITIDFKPKDVIIVEGIFALENKVLRDMMDVKIYVDTDADLRILRRLTRDTKERGRSMDSVINQYLSVVRPMHDQFIEPTKKYADIIIPEGGSNKVAIDIMTTKIQSLVSKQ</sequence>
<reference key="1">
    <citation type="journal article" date="2007" name="BMC Microbiol.">
        <title>Subtle genetic changes enhance virulence of methicillin resistant and sensitive Staphylococcus aureus.</title>
        <authorList>
            <person name="Highlander S.K."/>
            <person name="Hulten K.G."/>
            <person name="Qin X."/>
            <person name="Jiang H."/>
            <person name="Yerrapragada S."/>
            <person name="Mason E.O. Jr."/>
            <person name="Shang Y."/>
            <person name="Williams T.M."/>
            <person name="Fortunov R.M."/>
            <person name="Liu Y."/>
            <person name="Igboeli O."/>
            <person name="Petrosino J."/>
            <person name="Tirumalai M."/>
            <person name="Uzman A."/>
            <person name="Fox G.E."/>
            <person name="Cardenas A.M."/>
            <person name="Muzny D.M."/>
            <person name="Hemphill L."/>
            <person name="Ding Y."/>
            <person name="Dugan S."/>
            <person name="Blyth P.R."/>
            <person name="Buhay C.J."/>
            <person name="Dinh H.H."/>
            <person name="Hawes A.C."/>
            <person name="Holder M."/>
            <person name="Kovar C.L."/>
            <person name="Lee S.L."/>
            <person name="Liu W."/>
            <person name="Nazareth L.V."/>
            <person name="Wang Q."/>
            <person name="Zhou J."/>
            <person name="Kaplan S.L."/>
            <person name="Weinstock G.M."/>
        </authorList>
    </citation>
    <scope>NUCLEOTIDE SEQUENCE [LARGE SCALE GENOMIC DNA]</scope>
    <source>
        <strain>USA300 / TCH1516</strain>
    </source>
</reference>